<reference key="1">
    <citation type="journal article" date="2005" name="Science">
        <title>The genome sequence of Trypanosoma cruzi, etiologic agent of Chagas disease.</title>
        <authorList>
            <person name="El-Sayed N.M.A."/>
            <person name="Myler P.J."/>
            <person name="Bartholomeu D.C."/>
            <person name="Nilsson D."/>
            <person name="Aggarwal G."/>
            <person name="Tran A.-N."/>
            <person name="Ghedin E."/>
            <person name="Worthey E.A."/>
            <person name="Delcher A.L."/>
            <person name="Blandin G."/>
            <person name="Westenberger S.J."/>
            <person name="Caler E."/>
            <person name="Cerqueira G.C."/>
            <person name="Branche C."/>
            <person name="Haas B."/>
            <person name="Anupama A."/>
            <person name="Arner E."/>
            <person name="Aslund L."/>
            <person name="Attipoe P."/>
            <person name="Bontempi E."/>
            <person name="Bringaud F."/>
            <person name="Burton P."/>
            <person name="Cadag E."/>
            <person name="Campbell D.A."/>
            <person name="Carrington M."/>
            <person name="Crabtree J."/>
            <person name="Darban H."/>
            <person name="da Silveira J.F."/>
            <person name="de Jong P."/>
            <person name="Edwards K."/>
            <person name="Englund P.T."/>
            <person name="Fazelina G."/>
            <person name="Feldblyum T."/>
            <person name="Ferella M."/>
            <person name="Frasch A.C."/>
            <person name="Gull K."/>
            <person name="Horn D."/>
            <person name="Hou L."/>
            <person name="Huang Y."/>
            <person name="Kindlund E."/>
            <person name="Klingbeil M."/>
            <person name="Kluge S."/>
            <person name="Koo H."/>
            <person name="Lacerda D."/>
            <person name="Levin M.J."/>
            <person name="Lorenzi H."/>
            <person name="Louie T."/>
            <person name="Machado C.R."/>
            <person name="McCulloch R."/>
            <person name="McKenna A."/>
            <person name="Mizuno Y."/>
            <person name="Mottram J.C."/>
            <person name="Nelson S."/>
            <person name="Ochaya S."/>
            <person name="Osoegawa K."/>
            <person name="Pai G."/>
            <person name="Parsons M."/>
            <person name="Pentony M."/>
            <person name="Pettersson U."/>
            <person name="Pop M."/>
            <person name="Ramirez J.L."/>
            <person name="Rinta J."/>
            <person name="Robertson L."/>
            <person name="Salzberg S.L."/>
            <person name="Sanchez D.O."/>
            <person name="Seyler A."/>
            <person name="Sharma R."/>
            <person name="Shetty J."/>
            <person name="Simpson A.J."/>
            <person name="Sisk E."/>
            <person name="Tammi M.T."/>
            <person name="Tarleton R."/>
            <person name="Teixeira S."/>
            <person name="Van Aken S."/>
            <person name="Vogt C."/>
            <person name="Ward P.N."/>
            <person name="Wickstead B."/>
            <person name="Wortman J."/>
            <person name="White O."/>
            <person name="Fraser C.M."/>
            <person name="Stuart K.D."/>
            <person name="Andersson B."/>
        </authorList>
    </citation>
    <scope>NUCLEOTIDE SEQUENCE [LARGE SCALE GENOMIC DNA]</scope>
    <source>
        <strain>CL Brener</strain>
    </source>
</reference>
<gene>
    <name type="ORF">Tc00.1047053504105.210</name>
</gene>
<organism>
    <name type="scientific">Trypanosoma cruzi (strain CL Brener)</name>
    <dbReference type="NCBI Taxonomy" id="353153"/>
    <lineage>
        <taxon>Eukaryota</taxon>
        <taxon>Discoba</taxon>
        <taxon>Euglenozoa</taxon>
        <taxon>Kinetoplastea</taxon>
        <taxon>Metakinetoplastina</taxon>
        <taxon>Trypanosomatida</taxon>
        <taxon>Trypanosomatidae</taxon>
        <taxon>Trypanosoma</taxon>
        <taxon>Schizotrypanum</taxon>
    </lineage>
</organism>
<evidence type="ECO:0000255" key="1">
    <source>
        <dbReference type="HAMAP-Rule" id="MF_03137"/>
    </source>
</evidence>
<evidence type="ECO:0000305" key="2"/>
<proteinExistence type="inferred from homology"/>
<feature type="transit peptide" description="Mitochondrion" evidence="1">
    <location>
        <begin position="1"/>
        <end position="29"/>
    </location>
</feature>
<feature type="chain" id="PRO_0000402862" description="Translation factor GUF1 homolog 2, mitochondrial">
    <location>
        <begin position="30"/>
        <end position="748"/>
    </location>
</feature>
<feature type="domain" description="tr-type G">
    <location>
        <begin position="94"/>
        <end position="276"/>
    </location>
</feature>
<feature type="binding site" evidence="1">
    <location>
        <begin position="103"/>
        <end position="110"/>
    </location>
    <ligand>
        <name>GTP</name>
        <dbReference type="ChEBI" id="CHEBI:37565"/>
    </ligand>
</feature>
<feature type="binding site" evidence="1">
    <location>
        <begin position="167"/>
        <end position="171"/>
    </location>
    <ligand>
        <name>GTP</name>
        <dbReference type="ChEBI" id="CHEBI:37565"/>
    </ligand>
</feature>
<feature type="binding site" evidence="1">
    <location>
        <begin position="221"/>
        <end position="224"/>
    </location>
    <ligand>
        <name>GTP</name>
        <dbReference type="ChEBI" id="CHEBI:37565"/>
    </ligand>
</feature>
<keyword id="KW-0342">GTP-binding</keyword>
<keyword id="KW-0378">Hydrolase</keyword>
<keyword id="KW-0472">Membrane</keyword>
<keyword id="KW-0496">Mitochondrion</keyword>
<keyword id="KW-0999">Mitochondrion inner membrane</keyword>
<keyword id="KW-0547">Nucleotide-binding</keyword>
<keyword id="KW-0648">Protein biosynthesis</keyword>
<keyword id="KW-1185">Reference proteome</keyword>
<keyword id="KW-0809">Transit peptide</keyword>
<dbReference type="EC" id="3.6.5.-"/>
<dbReference type="EMBL" id="AAHK01000081">
    <property type="protein sequence ID" value="EAN97856.1"/>
    <property type="molecule type" value="Genomic_DNA"/>
</dbReference>
<dbReference type="RefSeq" id="XP_819707.1">
    <property type="nucleotide sequence ID" value="XM_814614.1"/>
</dbReference>
<dbReference type="SMR" id="Q4DZ91"/>
<dbReference type="FunCoup" id="Q4DZ91">
    <property type="interactions" value="339"/>
</dbReference>
<dbReference type="STRING" id="353153.Q4DZ91"/>
<dbReference type="PaxDb" id="353153-Q4DZ91"/>
<dbReference type="EnsemblProtists" id="EAN97856">
    <property type="protein sequence ID" value="EAN97856"/>
    <property type="gene ID" value="Tc00.1047053504105.210"/>
</dbReference>
<dbReference type="GeneID" id="3552196"/>
<dbReference type="KEGG" id="tcr:504105.210"/>
<dbReference type="eggNOG" id="KOG0462">
    <property type="taxonomic scope" value="Eukaryota"/>
</dbReference>
<dbReference type="InParanoid" id="Q4DZ91"/>
<dbReference type="OMA" id="QVKCDEN"/>
<dbReference type="Proteomes" id="UP000002296">
    <property type="component" value="Unassembled WGS sequence"/>
</dbReference>
<dbReference type="GO" id="GO:0005743">
    <property type="term" value="C:mitochondrial inner membrane"/>
    <property type="evidence" value="ECO:0007669"/>
    <property type="project" value="UniProtKB-SubCell"/>
</dbReference>
<dbReference type="GO" id="GO:0005759">
    <property type="term" value="C:mitochondrial matrix"/>
    <property type="evidence" value="ECO:0007669"/>
    <property type="project" value="UniProtKB-UniRule"/>
</dbReference>
<dbReference type="GO" id="GO:0005525">
    <property type="term" value="F:GTP binding"/>
    <property type="evidence" value="ECO:0007669"/>
    <property type="project" value="UniProtKB-UniRule"/>
</dbReference>
<dbReference type="GO" id="GO:0003924">
    <property type="term" value="F:GTPase activity"/>
    <property type="evidence" value="ECO:0007669"/>
    <property type="project" value="UniProtKB-UniRule"/>
</dbReference>
<dbReference type="GO" id="GO:0097177">
    <property type="term" value="F:mitochondrial ribosome binding"/>
    <property type="evidence" value="ECO:0007669"/>
    <property type="project" value="TreeGrafter"/>
</dbReference>
<dbReference type="GO" id="GO:0045727">
    <property type="term" value="P:positive regulation of translation"/>
    <property type="evidence" value="ECO:0007669"/>
    <property type="project" value="UniProtKB-UniRule"/>
</dbReference>
<dbReference type="GO" id="GO:0006412">
    <property type="term" value="P:translation"/>
    <property type="evidence" value="ECO:0007669"/>
    <property type="project" value="UniProtKB-KW"/>
</dbReference>
<dbReference type="CDD" id="cd01890">
    <property type="entry name" value="LepA"/>
    <property type="match status" value="1"/>
</dbReference>
<dbReference type="CDD" id="cd03709">
    <property type="entry name" value="lepA_C"/>
    <property type="match status" value="1"/>
</dbReference>
<dbReference type="FunFam" id="3.30.70.2570:FF:000001">
    <property type="entry name" value="Translation factor GUF1, mitochondrial"/>
    <property type="match status" value="1"/>
</dbReference>
<dbReference type="Gene3D" id="3.30.70.240">
    <property type="match status" value="1"/>
</dbReference>
<dbReference type="Gene3D" id="3.30.70.2570">
    <property type="entry name" value="Elongation factor 4, C-terminal domain"/>
    <property type="match status" value="1"/>
</dbReference>
<dbReference type="Gene3D" id="3.30.70.870">
    <property type="entry name" value="Elongation Factor G (Translational Gtpase), domain 3"/>
    <property type="match status" value="1"/>
</dbReference>
<dbReference type="Gene3D" id="3.40.50.300">
    <property type="entry name" value="P-loop containing nucleotide triphosphate hydrolases"/>
    <property type="match status" value="1"/>
</dbReference>
<dbReference type="Gene3D" id="2.40.30.10">
    <property type="entry name" value="Translation factors"/>
    <property type="match status" value="1"/>
</dbReference>
<dbReference type="HAMAP" id="MF_00071">
    <property type="entry name" value="LepA"/>
    <property type="match status" value="1"/>
</dbReference>
<dbReference type="InterPro" id="IPR006297">
    <property type="entry name" value="EF-4"/>
</dbReference>
<dbReference type="InterPro" id="IPR035647">
    <property type="entry name" value="EFG_III/V"/>
</dbReference>
<dbReference type="InterPro" id="IPR000640">
    <property type="entry name" value="EFG_V-like"/>
</dbReference>
<dbReference type="InterPro" id="IPR038363">
    <property type="entry name" value="LepA_C_sf"/>
</dbReference>
<dbReference type="InterPro" id="IPR013842">
    <property type="entry name" value="LepA_CTD"/>
</dbReference>
<dbReference type="InterPro" id="IPR035654">
    <property type="entry name" value="LepA_IV"/>
</dbReference>
<dbReference type="InterPro" id="IPR027417">
    <property type="entry name" value="P-loop_NTPase"/>
</dbReference>
<dbReference type="InterPro" id="IPR005225">
    <property type="entry name" value="Small_GTP-bd"/>
</dbReference>
<dbReference type="InterPro" id="IPR000795">
    <property type="entry name" value="T_Tr_GTP-bd_dom"/>
</dbReference>
<dbReference type="InterPro" id="IPR009000">
    <property type="entry name" value="Transl_B-barrel_sf"/>
</dbReference>
<dbReference type="NCBIfam" id="TIGR00231">
    <property type="entry name" value="small_GTP"/>
    <property type="match status" value="1"/>
</dbReference>
<dbReference type="PANTHER" id="PTHR43512:SF7">
    <property type="entry name" value="TRANSLATION FACTOR GUF1, MITOCHONDRIAL"/>
    <property type="match status" value="1"/>
</dbReference>
<dbReference type="PANTHER" id="PTHR43512">
    <property type="entry name" value="TRANSLATION FACTOR GUF1-RELATED"/>
    <property type="match status" value="1"/>
</dbReference>
<dbReference type="Pfam" id="PF00679">
    <property type="entry name" value="EFG_C"/>
    <property type="match status" value="1"/>
</dbReference>
<dbReference type="Pfam" id="PF00009">
    <property type="entry name" value="GTP_EFTU"/>
    <property type="match status" value="1"/>
</dbReference>
<dbReference type="Pfam" id="PF06421">
    <property type="entry name" value="LepA_C"/>
    <property type="match status" value="1"/>
</dbReference>
<dbReference type="PRINTS" id="PR00315">
    <property type="entry name" value="ELONGATNFCT"/>
</dbReference>
<dbReference type="SUPFAM" id="SSF54980">
    <property type="entry name" value="EF-G C-terminal domain-like"/>
    <property type="match status" value="2"/>
</dbReference>
<dbReference type="SUPFAM" id="SSF52540">
    <property type="entry name" value="P-loop containing nucleoside triphosphate hydrolases"/>
    <property type="match status" value="1"/>
</dbReference>
<dbReference type="SUPFAM" id="SSF50447">
    <property type="entry name" value="Translation proteins"/>
    <property type="match status" value="1"/>
</dbReference>
<dbReference type="PROSITE" id="PS00301">
    <property type="entry name" value="G_TR_1"/>
    <property type="match status" value="1"/>
</dbReference>
<dbReference type="PROSITE" id="PS51722">
    <property type="entry name" value="G_TR_2"/>
    <property type="match status" value="1"/>
</dbReference>
<accession>Q4DZ91</accession>
<sequence length="748" mass="82482">MRVGCCLLLKPLRQRLCTASISSRHIMRWCATSSSNINSTETAAKMPDDDVSGSLSAPSLLKYKIEPSTATMGAPRPPHDDDRAFCTLASFPPSHIRNVAVVAHVDHGKTTLSDAILRRTGVLSGSQVGTYTDRLLVERERGITIKAQTCSIFVVWDGEEFLLNLIDTPGHVDFQYEVSRSLSASDAALLLVDAAQGIEAQTMAHFHMALDRGLTILPVLTKMDAVLSDAPVDRALQDLEDSTGLLRREVLFTSAKEQLGIEALLHAIIERVPPPTGLLGLSDLQQLPPLLPGSAERVAMEEKMVPLRALLFDSWTSECGGGLRRPAPRGGEKVNSGNDNDRNLICLVRIIDGTLTAKTVVTFYQSQRRCEALEVGIIHPELRPTAALTAGMVGYVVFSQVRGEEFLVGETLYTLPTRKFARENIVPVPGFRRVQPVVFAGFYPDEGEYITQLREAVEKLRVNEPAVTMEPLDCPALGSGLQLGFLGMLHMQVFQERLLAEFGQRVLVTPPLVQYKYREAGSDEEEPLKPLTVHTWKWIHEGAACYLEPYVTATIITRREHFQAIDGEALRRFRGEQLDMRVLDDARVLVRYKMPLADLARGFFAVVKSLSHGYASLDYGDPVYEEADLVKVDVLVQKSRISALSVICLRSEAPSIGKRIVSSLKSNLTRTAVDIPLQAMVGSKIVARETVKAYRKDVTAKIHAGDISRKQKKWNDQKKGKERMARRTVGAVTLDQSILAAAMGAISL</sequence>
<protein>
    <recommendedName>
        <fullName>Translation factor GUF1 homolog 2, mitochondrial</fullName>
        <ecNumber>3.6.5.-</ecNumber>
    </recommendedName>
    <alternativeName>
        <fullName evidence="1">Elongation factor 4 homolog 2</fullName>
        <shortName evidence="1">EF-4 2</shortName>
    </alternativeName>
    <alternativeName>
        <fullName evidence="1">GTPase GUF1 homolog 2</fullName>
    </alternativeName>
    <alternativeName>
        <fullName evidence="1">Ribosomal back-translocase 2</fullName>
    </alternativeName>
</protein>
<comment type="function">
    <text evidence="1">Promotes mitochondrial protein synthesis. May act as a fidelity factor of the translation reaction, by catalyzing a one-codon backward translocation of tRNAs on improperly translocated ribosomes. Binds to mitochondrial ribosomes in a GTP-dependent manner.</text>
</comment>
<comment type="catalytic activity">
    <reaction evidence="1">
        <text>GTP + H2O = GDP + phosphate + H(+)</text>
        <dbReference type="Rhea" id="RHEA:19669"/>
        <dbReference type="ChEBI" id="CHEBI:15377"/>
        <dbReference type="ChEBI" id="CHEBI:15378"/>
        <dbReference type="ChEBI" id="CHEBI:37565"/>
        <dbReference type="ChEBI" id="CHEBI:43474"/>
        <dbReference type="ChEBI" id="CHEBI:58189"/>
    </reaction>
</comment>
<comment type="subcellular location">
    <subcellularLocation>
        <location evidence="1">Mitochondrion inner membrane</location>
        <topology evidence="1">Peripheral membrane protein</topology>
        <orientation evidence="1">Matrix side</orientation>
    </subcellularLocation>
</comment>
<comment type="similarity">
    <text evidence="2">Belongs to the TRAFAC class translation factor GTPase superfamily. Classic translation factor GTPase family. LepA subfamily.</text>
</comment>
<name>GUF12_TRYCC</name>